<name>FRSA_YERPS</name>
<sequence length="415" mass="47007">MAQANLSEILFKPKFKHPETSTLVRRTHCNHVVNIHSALDGDTANHWYRMINRLMWTWRGIDPLEIEEVLSRIACSKAEHSNNELLDTVVGYRNGNWIYEWANQGMMWQQKAMEETDPGSAGQFWLNAANLYSIASYPHLKGDELSEQAEVLSNRAYEEAAKYLPYTLKELTFPISDGGSLSGFLHMPTVGSAPFPTVLMCGGLDTLQSDYHRLFRDYLEPKGIAMLTIDLPSVGASSRWKLTQDTSYLHQQVLQALADVPWVDHQRVSVFGFRFGANVAVRLGYLEPQRVRAVACLGPIVHHLLCNSDSLRKVPDMYMDVMASRLGMADSTDETLNTEMNRYSLKTQGLLGRRCQTPMLAGFWENDPFSPKEEAKLICSSSADGKLLAIPSKPLYENFHRALLQTSEWLEDKMR</sequence>
<reference key="1">
    <citation type="journal article" date="2004" name="Proc. Natl. Acad. Sci. U.S.A.">
        <title>Insights into the evolution of Yersinia pestis through whole-genome comparison with Yersinia pseudotuberculosis.</title>
        <authorList>
            <person name="Chain P.S.G."/>
            <person name="Carniel E."/>
            <person name="Larimer F.W."/>
            <person name="Lamerdin J."/>
            <person name="Stoutland P.O."/>
            <person name="Regala W.M."/>
            <person name="Georgescu A.M."/>
            <person name="Vergez L.M."/>
            <person name="Land M.L."/>
            <person name="Motin V.L."/>
            <person name="Brubaker R.R."/>
            <person name="Fowler J."/>
            <person name="Hinnebusch J."/>
            <person name="Marceau M."/>
            <person name="Medigue C."/>
            <person name="Simonet M."/>
            <person name="Chenal-Francisque V."/>
            <person name="Souza B."/>
            <person name="Dacheux D."/>
            <person name="Elliott J.M."/>
            <person name="Derbise A."/>
            <person name="Hauser L.J."/>
            <person name="Garcia E."/>
        </authorList>
    </citation>
    <scope>NUCLEOTIDE SEQUENCE [LARGE SCALE GENOMIC DNA]</scope>
    <source>
        <strain>IP32953</strain>
    </source>
</reference>
<protein>
    <recommendedName>
        <fullName evidence="1">Esterase FrsA</fullName>
        <ecNumber evidence="1">3.1.1.1</ecNumber>
    </recommendedName>
</protein>
<gene>
    <name evidence="1" type="primary">frsA</name>
    <name type="ordered locus">YPTB0902</name>
</gene>
<comment type="function">
    <text evidence="1">Catalyzes the hydrolysis of esters.</text>
</comment>
<comment type="catalytic activity">
    <reaction evidence="1">
        <text>a carboxylic ester + H2O = an alcohol + a carboxylate + H(+)</text>
        <dbReference type="Rhea" id="RHEA:21164"/>
        <dbReference type="ChEBI" id="CHEBI:15377"/>
        <dbReference type="ChEBI" id="CHEBI:15378"/>
        <dbReference type="ChEBI" id="CHEBI:29067"/>
        <dbReference type="ChEBI" id="CHEBI:30879"/>
        <dbReference type="ChEBI" id="CHEBI:33308"/>
        <dbReference type="EC" id="3.1.1.1"/>
    </reaction>
</comment>
<comment type="similarity">
    <text evidence="1">Belongs to the FrsA family.</text>
</comment>
<feature type="chain" id="PRO_1000064497" description="Esterase FrsA">
    <location>
        <begin position="1"/>
        <end position="415"/>
    </location>
</feature>
<keyword id="KW-0378">Hydrolase</keyword>
<keyword id="KW-0719">Serine esterase</keyword>
<proteinExistence type="inferred from homology"/>
<dbReference type="EC" id="3.1.1.1" evidence="1"/>
<dbReference type="EMBL" id="BX936398">
    <property type="protein sequence ID" value="CAH20142.1"/>
    <property type="molecule type" value="Genomic_DNA"/>
</dbReference>
<dbReference type="RefSeq" id="WP_002208703.1">
    <property type="nucleotide sequence ID" value="NZ_CP009712.1"/>
</dbReference>
<dbReference type="SMR" id="Q66DZ1"/>
<dbReference type="ESTHER" id="yerpe-y3224">
    <property type="family name" value="Duf_1100-R"/>
</dbReference>
<dbReference type="GeneID" id="57975494"/>
<dbReference type="KEGG" id="ypo:BZ17_1644"/>
<dbReference type="KEGG" id="yps:YPTB0902"/>
<dbReference type="PATRIC" id="fig|273123.14.peg.1747"/>
<dbReference type="Proteomes" id="UP000001011">
    <property type="component" value="Chromosome"/>
</dbReference>
<dbReference type="GO" id="GO:0106435">
    <property type="term" value="F:carboxylesterase activity"/>
    <property type="evidence" value="ECO:0007669"/>
    <property type="project" value="UniProtKB-EC"/>
</dbReference>
<dbReference type="FunFam" id="3.40.50.1820:FF:000022">
    <property type="entry name" value="Esterase FrsA"/>
    <property type="match status" value="1"/>
</dbReference>
<dbReference type="Gene3D" id="3.40.50.1820">
    <property type="entry name" value="alpha/beta hydrolase"/>
    <property type="match status" value="1"/>
</dbReference>
<dbReference type="HAMAP" id="MF_01063">
    <property type="entry name" value="FrsA"/>
    <property type="match status" value="1"/>
</dbReference>
<dbReference type="InterPro" id="IPR029058">
    <property type="entry name" value="AB_hydrolase_fold"/>
</dbReference>
<dbReference type="InterPro" id="IPR043423">
    <property type="entry name" value="FrsA"/>
</dbReference>
<dbReference type="InterPro" id="IPR010520">
    <property type="entry name" value="FrsA-like"/>
</dbReference>
<dbReference type="InterPro" id="IPR050261">
    <property type="entry name" value="FrsA_esterase"/>
</dbReference>
<dbReference type="NCBIfam" id="NF003460">
    <property type="entry name" value="PRK05077.1"/>
    <property type="match status" value="1"/>
</dbReference>
<dbReference type="PANTHER" id="PTHR22946">
    <property type="entry name" value="DIENELACTONE HYDROLASE DOMAIN-CONTAINING PROTEIN-RELATED"/>
    <property type="match status" value="1"/>
</dbReference>
<dbReference type="PANTHER" id="PTHR22946:SF4">
    <property type="entry name" value="ESTERASE FRSA"/>
    <property type="match status" value="1"/>
</dbReference>
<dbReference type="Pfam" id="PF06500">
    <property type="entry name" value="FrsA-like"/>
    <property type="match status" value="1"/>
</dbReference>
<dbReference type="SUPFAM" id="SSF53474">
    <property type="entry name" value="alpha/beta-Hydrolases"/>
    <property type="match status" value="1"/>
</dbReference>
<evidence type="ECO:0000255" key="1">
    <source>
        <dbReference type="HAMAP-Rule" id="MF_01063"/>
    </source>
</evidence>
<accession>Q66DZ1</accession>
<organism>
    <name type="scientific">Yersinia pseudotuberculosis serotype I (strain IP32953)</name>
    <dbReference type="NCBI Taxonomy" id="273123"/>
    <lineage>
        <taxon>Bacteria</taxon>
        <taxon>Pseudomonadati</taxon>
        <taxon>Pseudomonadota</taxon>
        <taxon>Gammaproteobacteria</taxon>
        <taxon>Enterobacterales</taxon>
        <taxon>Yersiniaceae</taxon>
        <taxon>Yersinia</taxon>
    </lineage>
</organism>